<evidence type="ECO:0000250" key="1">
    <source>
        <dbReference type="UniProtKB" id="P03971"/>
    </source>
</evidence>
<evidence type="ECO:0000250" key="2">
    <source>
        <dbReference type="UniProtKB" id="P27106"/>
    </source>
</evidence>
<evidence type="ECO:0000255" key="3"/>
<evidence type="ECO:0000269" key="4">
    <source>
    </source>
</evidence>
<evidence type="ECO:0000269" key="5">
    <source>
    </source>
</evidence>
<evidence type="ECO:0000305" key="6"/>
<sequence length="575" mass="61505">MQGPSLSQLVLVLMGALLEAGTPREEVSSTPALPREPRTGTEGLIFHWDWNWPPPGAWPPGGPQDPLCLVTLNGTPGNGSSPFLWVVGTLSSYEQAFLEAVRHARWGPQDLANFGLCPPSLRQAALPLLQQLQAWLGEPRGQRLVVLHLEEVSWEPTPLLKFQEPLPGEASPLELALLVLYPGPGPEVTVTGAGLPGAQSLCPTRDSGFLALAVDRPERAWRGSGLALTLRRRGNGASLSTAQLQALLFGADSRCFTRMTPALLLLPPQGPVPMPAHGRVDSMPFPQPRLSPEPEEPLPSTDPFLETLTRLVRALRGPPARIPPPSLALDPGALAGFPQGQVNLSDPAALERLLNSEEPLLLLLPPPTAVTAGVPAPLQGPVTEMWASSLARRVATEFQSAAAELRGFPGLPPTATLLLARLLALCPGDRGDPGGPLRAVLLLKALQGLRTEWRWRERSGPARAQRSAGTAVSNGPCALRELSVDLRAERSVLIPETYQANNCQGTCGWPQSDRNPRYGNHVVLLLKMQARGAALARPPCCVPTAYAGKLLISLSEERISAHHVPNMVATECGCR</sequence>
<reference key="1">
    <citation type="submission" date="1998-07" db="EMBL/GenBank/DDBJ databases">
        <authorList>
            <person name="Daneau I."/>
            <person name="Silversides D.W."/>
        </authorList>
    </citation>
    <scope>NUCLEOTIDE SEQUENCE [MRNA]</scope>
</reference>
<reference key="2">
    <citation type="journal article" date="1977" name="Nature">
        <title>Anti-Muellerian hormone is a functional marker of foetal Sertoli cells.</title>
        <authorList>
            <person name="Tran D."/>
            <person name="Muesy-Dessole N."/>
            <person name="Josso N."/>
        </authorList>
    </citation>
    <scope>TISSUE SPECIFICITY</scope>
</reference>
<reference key="3">
    <citation type="journal article" date="2018" name="PLoS ONE">
        <title>Presence of anti-Muellerian hormone (AMH) during follicular development in the porcine ovary.</title>
        <authorList>
            <person name="Almeida F.R.C.L."/>
            <person name="Costermans N.G.J."/>
            <person name="Soede N.M."/>
            <person name="Bunschoten A."/>
            <person name="Keijer J."/>
            <person name="Kemp B."/>
            <person name="Teerds K.J."/>
        </authorList>
    </citation>
    <scope>TISSUE SPECIFICITY</scope>
    <scope>DEVELOPMENTAL STAGE</scope>
</reference>
<proteinExistence type="evidence at protein level"/>
<keyword id="KW-0221">Differentiation</keyword>
<keyword id="KW-1015">Disulfide bond</keyword>
<keyword id="KW-0325">Glycoprotein</keyword>
<keyword id="KW-0334">Gonadal differentiation</keyword>
<keyword id="KW-0339">Growth factor</keyword>
<keyword id="KW-1185">Reference proteome</keyword>
<keyword id="KW-0964">Secreted</keyword>
<keyword id="KW-0732">Signal</keyword>
<protein>
    <recommendedName>
        <fullName>Muellerian-inhibiting factor</fullName>
    </recommendedName>
    <alternativeName>
        <fullName>Anti-Muellerian hormone</fullName>
        <shortName>AMH</shortName>
    </alternativeName>
    <alternativeName>
        <fullName>Muellerian-inhibiting substance</fullName>
        <shortName>MIS</shortName>
    </alternativeName>
</protein>
<dbReference type="EMBL" id="U80853">
    <property type="protein sequence ID" value="AAC25968.1"/>
    <property type="molecule type" value="mRNA"/>
</dbReference>
<dbReference type="PIR" id="T11753">
    <property type="entry name" value="T11753"/>
</dbReference>
<dbReference type="SMR" id="P79295"/>
<dbReference type="FunCoup" id="P79295">
    <property type="interactions" value="36"/>
</dbReference>
<dbReference type="STRING" id="9823.ENSSSCP00000058593"/>
<dbReference type="GlyCosmos" id="P79295">
    <property type="glycosylation" value="2 sites, No reported glycans"/>
</dbReference>
<dbReference type="GlyGen" id="P79295">
    <property type="glycosylation" value="3 sites"/>
</dbReference>
<dbReference type="InParanoid" id="P79295"/>
<dbReference type="ChiTaRS" id="AMH">
    <property type="organism name" value="pig"/>
</dbReference>
<dbReference type="Proteomes" id="UP000008227">
    <property type="component" value="Unplaced"/>
</dbReference>
<dbReference type="Proteomes" id="UP000314985">
    <property type="component" value="Unplaced"/>
</dbReference>
<dbReference type="Proteomes" id="UP000694570">
    <property type="component" value="Unplaced"/>
</dbReference>
<dbReference type="Proteomes" id="UP000694571">
    <property type="component" value="Unplaced"/>
</dbReference>
<dbReference type="Proteomes" id="UP000694720">
    <property type="component" value="Unplaced"/>
</dbReference>
<dbReference type="Proteomes" id="UP000694722">
    <property type="component" value="Unplaced"/>
</dbReference>
<dbReference type="Proteomes" id="UP000694723">
    <property type="component" value="Unplaced"/>
</dbReference>
<dbReference type="Proteomes" id="UP000694724">
    <property type="component" value="Unplaced"/>
</dbReference>
<dbReference type="Proteomes" id="UP000694725">
    <property type="component" value="Unplaced"/>
</dbReference>
<dbReference type="Proteomes" id="UP000694726">
    <property type="component" value="Unplaced"/>
</dbReference>
<dbReference type="Proteomes" id="UP000694727">
    <property type="component" value="Unplaced"/>
</dbReference>
<dbReference type="Proteomes" id="UP000694728">
    <property type="component" value="Unplaced"/>
</dbReference>
<dbReference type="GO" id="GO:0005615">
    <property type="term" value="C:extracellular space"/>
    <property type="evidence" value="ECO:0000250"/>
    <property type="project" value="UniProtKB"/>
</dbReference>
<dbReference type="GO" id="GO:0008083">
    <property type="term" value="F:growth factor activity"/>
    <property type="evidence" value="ECO:0007669"/>
    <property type="project" value="UniProtKB-KW"/>
</dbReference>
<dbReference type="GO" id="GO:0005114">
    <property type="term" value="F:type II transforming growth factor beta receptor binding"/>
    <property type="evidence" value="ECO:0000250"/>
    <property type="project" value="UniProtKB"/>
</dbReference>
<dbReference type="GO" id="GO:1990262">
    <property type="term" value="P:anti-Mullerian hormone receptor signaling pathway"/>
    <property type="evidence" value="ECO:0000250"/>
    <property type="project" value="UniProtKB"/>
</dbReference>
<dbReference type="GO" id="GO:0007506">
    <property type="term" value="P:gonadal mesoderm development"/>
    <property type="evidence" value="ECO:0007669"/>
    <property type="project" value="UniProtKB-KW"/>
</dbReference>
<dbReference type="GO" id="GO:0033327">
    <property type="term" value="P:Leydig cell differentiation"/>
    <property type="evidence" value="ECO:0000250"/>
    <property type="project" value="UniProtKB"/>
</dbReference>
<dbReference type="GO" id="GO:0001880">
    <property type="term" value="P:Mullerian duct regression"/>
    <property type="evidence" value="ECO:0000250"/>
    <property type="project" value="UniProtKB"/>
</dbReference>
<dbReference type="GO" id="GO:2000355">
    <property type="term" value="P:negative regulation of ovarian follicle development"/>
    <property type="evidence" value="ECO:0000250"/>
    <property type="project" value="UniProtKB"/>
</dbReference>
<dbReference type="GO" id="GO:0001541">
    <property type="term" value="P:ovarian follicle development"/>
    <property type="evidence" value="ECO:0000250"/>
    <property type="project" value="UniProtKB"/>
</dbReference>
<dbReference type="CDD" id="cd13757">
    <property type="entry name" value="TGF_beta_AMH"/>
    <property type="match status" value="1"/>
</dbReference>
<dbReference type="FunFam" id="2.10.90.10:FF:000033">
    <property type="entry name" value="Muellerian-inhibiting factor"/>
    <property type="match status" value="1"/>
</dbReference>
<dbReference type="Gene3D" id="2.10.90.10">
    <property type="entry name" value="Cystine-knot cytokines"/>
    <property type="match status" value="1"/>
</dbReference>
<dbReference type="InterPro" id="IPR006799">
    <property type="entry name" value="AMH_N"/>
</dbReference>
<dbReference type="InterPro" id="IPR029034">
    <property type="entry name" value="Cystine-knot_cytokine"/>
</dbReference>
<dbReference type="InterPro" id="IPR021203">
    <property type="entry name" value="Muellerian-inhibiting_factor"/>
</dbReference>
<dbReference type="InterPro" id="IPR001839">
    <property type="entry name" value="TGF-b_C"/>
</dbReference>
<dbReference type="InterPro" id="IPR017948">
    <property type="entry name" value="TGFb_CS"/>
</dbReference>
<dbReference type="PANTHER" id="PTHR15009">
    <property type="entry name" value="MUELLERIAN-INHIBITING FACTOR"/>
    <property type="match status" value="1"/>
</dbReference>
<dbReference type="PANTHER" id="PTHR15009:SF4">
    <property type="entry name" value="MUELLERIAN-INHIBITING FACTOR"/>
    <property type="match status" value="1"/>
</dbReference>
<dbReference type="Pfam" id="PF04709">
    <property type="entry name" value="AMH_N"/>
    <property type="match status" value="1"/>
</dbReference>
<dbReference type="Pfam" id="PF00019">
    <property type="entry name" value="TGF_beta"/>
    <property type="match status" value="1"/>
</dbReference>
<dbReference type="PIRSF" id="PIRSF037270">
    <property type="entry name" value="Muellerian-inhibiting_factor"/>
    <property type="match status" value="1"/>
</dbReference>
<dbReference type="SMART" id="SM00204">
    <property type="entry name" value="TGFB"/>
    <property type="match status" value="1"/>
</dbReference>
<dbReference type="SUPFAM" id="SSF57501">
    <property type="entry name" value="Cystine-knot cytokines"/>
    <property type="match status" value="1"/>
</dbReference>
<dbReference type="PROSITE" id="PS00250">
    <property type="entry name" value="TGF_BETA_1"/>
    <property type="match status" value="1"/>
</dbReference>
<dbReference type="PROSITE" id="PS51362">
    <property type="entry name" value="TGF_BETA_2"/>
    <property type="match status" value="1"/>
</dbReference>
<feature type="signal peptide" evidence="3">
    <location>
        <begin position="1"/>
        <end position="20"/>
    </location>
</feature>
<feature type="propeptide" id="PRO_0000033750" evidence="1">
    <location>
        <begin position="21"/>
        <end position="466"/>
    </location>
</feature>
<feature type="chain" id="PRO_0000033751" description="Muellerian-inhibiting factor">
    <location>
        <begin position="467"/>
        <end position="575"/>
    </location>
</feature>
<feature type="site" description="Cleavage" evidence="1">
    <location>
        <begin position="466"/>
        <end position="467"/>
    </location>
</feature>
<feature type="glycosylation site" description="N-linked (GlcNAc...) asparagine" evidence="3">
    <location>
        <position position="78"/>
    </location>
</feature>
<feature type="glycosylation site" description="N-linked (GlcNAc...) asparagine" evidence="3">
    <location>
        <position position="343"/>
    </location>
</feature>
<feature type="disulfide bond" evidence="1">
    <location>
        <begin position="477"/>
        <end position="541"/>
    </location>
</feature>
<feature type="disulfide bond" evidence="1">
    <location>
        <begin position="503"/>
        <end position="572"/>
    </location>
</feature>
<feature type="disulfide bond" evidence="1">
    <location>
        <begin position="507"/>
        <end position="574"/>
    </location>
</feature>
<feature type="disulfide bond" description="Interchain" evidence="1">
    <location>
        <position position="540"/>
    </location>
</feature>
<gene>
    <name type="primary">AMH</name>
</gene>
<comment type="function">
    <text evidence="1 2">Plays an important role in several reproductive functions. Induces Muellerian duct regression during male fetal sexual differentiation and plays a role in Leydig cell differentiation and function (By similarity). In female acts as a negative regulator of the primordial to primary follicle transition and decreases FSH sensitivity of growing follicles. AMH signals by binding to a specific type-II receptor, AMHR2, that heterodimerizes with type-I receptors (ACVR1 and BMPR1A), and recruiting SMAD proteins that are translocated to the nucleus to regulate target gene expression (By similarity).</text>
</comment>
<comment type="subunit">
    <text evidence="1">Homodimer; disulfide-linked.</text>
</comment>
<comment type="subcellular location">
    <subcellularLocation>
        <location evidence="1">Secreted</location>
    </subcellularLocation>
</comment>
<comment type="tissue specificity">
    <text evidence="4 5">Detected in fetal Sertoli cells (PubMed:909589). Expressed in granulosa cells of growing follicles but also in theca cells of preovulatory follicles and corpora lutea (at protein level) (PubMed:30063719).</text>
</comment>
<comment type="developmental stage">
    <text evidence="4">Appears for the first time during follicular development in the fusiform granulosa cells of recruited primordial follicles and continues to be present in granulosa cells up to the antral stage.</text>
</comment>
<comment type="PTM">
    <text evidence="1">Preproprotein is proteolytically processed to generate N- and C-terminal cleavage products that homodimerize and associate to form a biologically active non-covalent complex. Binding of the non-covalent complex to AMHR2 induces dissociation of the pro-region from the mature C-terminal dimer. The N-terminal portion of the protein, despite having no intrinsic activity, has the role of amplifying the activity of the C-terminus.</text>
</comment>
<comment type="similarity">
    <text evidence="6">Belongs to the TGF-beta family.</text>
</comment>
<organism>
    <name type="scientific">Sus scrofa</name>
    <name type="common">Pig</name>
    <dbReference type="NCBI Taxonomy" id="9823"/>
    <lineage>
        <taxon>Eukaryota</taxon>
        <taxon>Metazoa</taxon>
        <taxon>Chordata</taxon>
        <taxon>Craniata</taxon>
        <taxon>Vertebrata</taxon>
        <taxon>Euteleostomi</taxon>
        <taxon>Mammalia</taxon>
        <taxon>Eutheria</taxon>
        <taxon>Laurasiatheria</taxon>
        <taxon>Artiodactyla</taxon>
        <taxon>Suina</taxon>
        <taxon>Suidae</taxon>
        <taxon>Sus</taxon>
    </lineage>
</organism>
<name>MIS_PIG</name>
<accession>P79295</accession>